<organism>
    <name type="scientific">Sinorhizobium medicae (strain WSM419)</name>
    <name type="common">Ensifer medicae</name>
    <dbReference type="NCBI Taxonomy" id="366394"/>
    <lineage>
        <taxon>Bacteria</taxon>
        <taxon>Pseudomonadati</taxon>
        <taxon>Pseudomonadota</taxon>
        <taxon>Alphaproteobacteria</taxon>
        <taxon>Hyphomicrobiales</taxon>
        <taxon>Rhizobiaceae</taxon>
        <taxon>Sinorhizobium/Ensifer group</taxon>
        <taxon>Sinorhizobium</taxon>
    </lineage>
</organism>
<accession>A6U7J2</accession>
<protein>
    <recommendedName>
        <fullName evidence="1">Probable cytosol aminopeptidase</fullName>
        <ecNumber evidence="1">3.4.11.1</ecNumber>
    </recommendedName>
    <alternativeName>
        <fullName evidence="1">Leucine aminopeptidase</fullName>
        <shortName evidence="1">LAP</shortName>
        <ecNumber evidence="1">3.4.11.10</ecNumber>
    </alternativeName>
    <alternativeName>
        <fullName evidence="1">Leucyl aminopeptidase</fullName>
    </alternativeName>
</protein>
<gene>
    <name evidence="1" type="primary">pepA</name>
    <name type="ordered locus">Smed_0766</name>
</gene>
<keyword id="KW-0031">Aminopeptidase</keyword>
<keyword id="KW-0963">Cytoplasm</keyword>
<keyword id="KW-0378">Hydrolase</keyword>
<keyword id="KW-0464">Manganese</keyword>
<keyword id="KW-0479">Metal-binding</keyword>
<keyword id="KW-0645">Protease</keyword>
<sequence>MPTKFEFSFSKSHRPAGGVAVLLQAAGAKEAAGAAVADPESVLAKAAKIGKFTGKALSTLDVIAPHGSPADRIVLLGVGHAAGMGDHDWLKAGGAAAAKLRSAEKITVFLDAPGIEVTGKAAADFALGMEMNAYSFESYKTRKSDDEPKTTQKPVKVTIVTATVIAAKKAFGTAQAVGEGVFLARDLVNEPANVLGPVEFAARAKELEKLGVEVEILTEREMKKLGMGALLGVAQGSSRPPRLVVMQWKGGKAKDKSVAFIGKGVVFDTGGISIKPASGMEDMKGDMGGAAAVTGLMHVLAARKAAVNAIGIIGLVENMPDGSAQRPGDIVTSMSGQTIEVINTDAEGRLVLGDALWYCNDRFKPQLMIDLATLTGAIMVALSNHYAGLFSNDDRLAEQLLAAGLVTQERLWRMPLGKEYDKMIDSKFADMKNTGGRHGGSVTAAQFLKRFVKDTPWAHLDIAGTAMGSPTDELNQSWGSGFGVRLLDQLVRANYES</sequence>
<name>AMPA_SINMW</name>
<evidence type="ECO:0000255" key="1">
    <source>
        <dbReference type="HAMAP-Rule" id="MF_00181"/>
    </source>
</evidence>
<feature type="chain" id="PRO_1000019984" description="Probable cytosol aminopeptidase">
    <location>
        <begin position="1"/>
        <end position="497"/>
    </location>
</feature>
<feature type="active site" evidence="1">
    <location>
        <position position="275"/>
    </location>
</feature>
<feature type="active site" evidence="1">
    <location>
        <position position="349"/>
    </location>
</feature>
<feature type="binding site" evidence="1">
    <location>
        <position position="263"/>
    </location>
    <ligand>
        <name>Mn(2+)</name>
        <dbReference type="ChEBI" id="CHEBI:29035"/>
        <label>2</label>
    </ligand>
</feature>
<feature type="binding site" evidence="1">
    <location>
        <position position="268"/>
    </location>
    <ligand>
        <name>Mn(2+)</name>
        <dbReference type="ChEBI" id="CHEBI:29035"/>
        <label>1</label>
    </ligand>
</feature>
<feature type="binding site" evidence="1">
    <location>
        <position position="268"/>
    </location>
    <ligand>
        <name>Mn(2+)</name>
        <dbReference type="ChEBI" id="CHEBI:29035"/>
        <label>2</label>
    </ligand>
</feature>
<feature type="binding site" evidence="1">
    <location>
        <position position="286"/>
    </location>
    <ligand>
        <name>Mn(2+)</name>
        <dbReference type="ChEBI" id="CHEBI:29035"/>
        <label>2</label>
    </ligand>
</feature>
<feature type="binding site" evidence="1">
    <location>
        <position position="345"/>
    </location>
    <ligand>
        <name>Mn(2+)</name>
        <dbReference type="ChEBI" id="CHEBI:29035"/>
        <label>1</label>
    </ligand>
</feature>
<feature type="binding site" evidence="1">
    <location>
        <position position="347"/>
    </location>
    <ligand>
        <name>Mn(2+)</name>
        <dbReference type="ChEBI" id="CHEBI:29035"/>
        <label>1</label>
    </ligand>
</feature>
<feature type="binding site" evidence="1">
    <location>
        <position position="347"/>
    </location>
    <ligand>
        <name>Mn(2+)</name>
        <dbReference type="ChEBI" id="CHEBI:29035"/>
        <label>2</label>
    </ligand>
</feature>
<comment type="function">
    <text evidence="1">Presumably involved in the processing and regular turnover of intracellular proteins. Catalyzes the removal of unsubstituted N-terminal amino acids from various peptides.</text>
</comment>
<comment type="catalytic activity">
    <reaction evidence="1">
        <text>Release of an N-terminal amino acid, Xaa-|-Yaa-, in which Xaa is preferably Leu, but may be other amino acids including Pro although not Arg or Lys, and Yaa may be Pro. Amino acid amides and methyl esters are also readily hydrolyzed, but rates on arylamides are exceedingly low.</text>
        <dbReference type="EC" id="3.4.11.1"/>
    </reaction>
</comment>
<comment type="catalytic activity">
    <reaction evidence="1">
        <text>Release of an N-terminal amino acid, preferentially leucine, but not glutamic or aspartic acids.</text>
        <dbReference type="EC" id="3.4.11.10"/>
    </reaction>
</comment>
<comment type="cofactor">
    <cofactor evidence="1">
        <name>Mn(2+)</name>
        <dbReference type="ChEBI" id="CHEBI:29035"/>
    </cofactor>
    <text evidence="1">Binds 2 manganese ions per subunit.</text>
</comment>
<comment type="subcellular location">
    <subcellularLocation>
        <location evidence="1">Cytoplasm</location>
    </subcellularLocation>
</comment>
<comment type="similarity">
    <text evidence="1">Belongs to the peptidase M17 family.</text>
</comment>
<dbReference type="EC" id="3.4.11.1" evidence="1"/>
<dbReference type="EC" id="3.4.11.10" evidence="1"/>
<dbReference type="EMBL" id="CP000738">
    <property type="protein sequence ID" value="ABR59622.1"/>
    <property type="molecule type" value="Genomic_DNA"/>
</dbReference>
<dbReference type="RefSeq" id="WP_011974964.1">
    <property type="nucleotide sequence ID" value="NC_009636.1"/>
</dbReference>
<dbReference type="RefSeq" id="YP_001326457.1">
    <property type="nucleotide sequence ID" value="NC_009636.1"/>
</dbReference>
<dbReference type="SMR" id="A6U7J2"/>
<dbReference type="STRING" id="366394.Smed_0766"/>
<dbReference type="KEGG" id="smd:Smed_0766"/>
<dbReference type="PATRIC" id="fig|366394.8.peg.3877"/>
<dbReference type="eggNOG" id="COG0260">
    <property type="taxonomic scope" value="Bacteria"/>
</dbReference>
<dbReference type="HOGENOM" id="CLU_013734_6_0_5"/>
<dbReference type="OrthoDB" id="9809354at2"/>
<dbReference type="Proteomes" id="UP000001108">
    <property type="component" value="Chromosome"/>
</dbReference>
<dbReference type="GO" id="GO:0005737">
    <property type="term" value="C:cytoplasm"/>
    <property type="evidence" value="ECO:0007669"/>
    <property type="project" value="UniProtKB-SubCell"/>
</dbReference>
<dbReference type="GO" id="GO:0030145">
    <property type="term" value="F:manganese ion binding"/>
    <property type="evidence" value="ECO:0007669"/>
    <property type="project" value="UniProtKB-UniRule"/>
</dbReference>
<dbReference type="GO" id="GO:0070006">
    <property type="term" value="F:metalloaminopeptidase activity"/>
    <property type="evidence" value="ECO:0007669"/>
    <property type="project" value="InterPro"/>
</dbReference>
<dbReference type="GO" id="GO:0006508">
    <property type="term" value="P:proteolysis"/>
    <property type="evidence" value="ECO:0007669"/>
    <property type="project" value="UniProtKB-KW"/>
</dbReference>
<dbReference type="CDD" id="cd00433">
    <property type="entry name" value="Peptidase_M17"/>
    <property type="match status" value="1"/>
</dbReference>
<dbReference type="Gene3D" id="3.40.220.10">
    <property type="entry name" value="Leucine Aminopeptidase, subunit E, domain 1"/>
    <property type="match status" value="1"/>
</dbReference>
<dbReference type="Gene3D" id="3.40.630.10">
    <property type="entry name" value="Zn peptidases"/>
    <property type="match status" value="1"/>
</dbReference>
<dbReference type="HAMAP" id="MF_00181">
    <property type="entry name" value="Cytosol_peptidase_M17"/>
    <property type="match status" value="1"/>
</dbReference>
<dbReference type="InterPro" id="IPR011356">
    <property type="entry name" value="Leucine_aapep/pepB"/>
</dbReference>
<dbReference type="InterPro" id="IPR043472">
    <property type="entry name" value="Macro_dom-like"/>
</dbReference>
<dbReference type="InterPro" id="IPR000819">
    <property type="entry name" value="Peptidase_M17_C"/>
</dbReference>
<dbReference type="InterPro" id="IPR023042">
    <property type="entry name" value="Peptidase_M17_leu_NH2_pept"/>
</dbReference>
<dbReference type="InterPro" id="IPR008283">
    <property type="entry name" value="Peptidase_M17_N"/>
</dbReference>
<dbReference type="NCBIfam" id="NF002073">
    <property type="entry name" value="PRK00913.1-2"/>
    <property type="match status" value="1"/>
</dbReference>
<dbReference type="NCBIfam" id="NF002074">
    <property type="entry name" value="PRK00913.1-4"/>
    <property type="match status" value="1"/>
</dbReference>
<dbReference type="NCBIfam" id="NF002075">
    <property type="entry name" value="PRK00913.2-2"/>
    <property type="match status" value="1"/>
</dbReference>
<dbReference type="NCBIfam" id="NF002077">
    <property type="entry name" value="PRK00913.2-4"/>
    <property type="match status" value="1"/>
</dbReference>
<dbReference type="NCBIfam" id="NF002083">
    <property type="entry name" value="PRK00913.3-5"/>
    <property type="match status" value="1"/>
</dbReference>
<dbReference type="PANTHER" id="PTHR11963:SF23">
    <property type="entry name" value="CYTOSOL AMINOPEPTIDASE"/>
    <property type="match status" value="1"/>
</dbReference>
<dbReference type="PANTHER" id="PTHR11963">
    <property type="entry name" value="LEUCINE AMINOPEPTIDASE-RELATED"/>
    <property type="match status" value="1"/>
</dbReference>
<dbReference type="Pfam" id="PF00883">
    <property type="entry name" value="Peptidase_M17"/>
    <property type="match status" value="1"/>
</dbReference>
<dbReference type="Pfam" id="PF02789">
    <property type="entry name" value="Peptidase_M17_N"/>
    <property type="match status" value="1"/>
</dbReference>
<dbReference type="PRINTS" id="PR00481">
    <property type="entry name" value="LAMNOPPTDASE"/>
</dbReference>
<dbReference type="SUPFAM" id="SSF52949">
    <property type="entry name" value="Macro domain-like"/>
    <property type="match status" value="1"/>
</dbReference>
<dbReference type="SUPFAM" id="SSF53187">
    <property type="entry name" value="Zn-dependent exopeptidases"/>
    <property type="match status" value="1"/>
</dbReference>
<dbReference type="PROSITE" id="PS00631">
    <property type="entry name" value="CYTOSOL_AP"/>
    <property type="match status" value="1"/>
</dbReference>
<proteinExistence type="inferred from homology"/>
<reference key="1">
    <citation type="submission" date="2007-06" db="EMBL/GenBank/DDBJ databases">
        <title>Complete sequence of Sinorhizobium medicae WSM419 chromosome.</title>
        <authorList>
            <consortium name="US DOE Joint Genome Institute"/>
            <person name="Copeland A."/>
            <person name="Lucas S."/>
            <person name="Lapidus A."/>
            <person name="Barry K."/>
            <person name="Glavina del Rio T."/>
            <person name="Dalin E."/>
            <person name="Tice H."/>
            <person name="Pitluck S."/>
            <person name="Chain P."/>
            <person name="Malfatti S."/>
            <person name="Shin M."/>
            <person name="Vergez L."/>
            <person name="Schmutz J."/>
            <person name="Larimer F."/>
            <person name="Land M."/>
            <person name="Hauser L."/>
            <person name="Kyrpides N."/>
            <person name="Mikhailova N."/>
            <person name="Reeve W.G."/>
            <person name="Richardson P."/>
        </authorList>
    </citation>
    <scope>NUCLEOTIDE SEQUENCE [LARGE SCALE GENOMIC DNA]</scope>
    <source>
        <strain>WSM419</strain>
    </source>
</reference>